<name>END4_ERWT9</name>
<organism>
    <name type="scientific">Erwinia tasmaniensis (strain DSM 17950 / CFBP 7177 / CIP 109463 / NCPPB 4357 / Et1/99)</name>
    <dbReference type="NCBI Taxonomy" id="465817"/>
    <lineage>
        <taxon>Bacteria</taxon>
        <taxon>Pseudomonadati</taxon>
        <taxon>Pseudomonadota</taxon>
        <taxon>Gammaproteobacteria</taxon>
        <taxon>Enterobacterales</taxon>
        <taxon>Erwiniaceae</taxon>
        <taxon>Erwinia</taxon>
    </lineage>
</organism>
<gene>
    <name evidence="1" type="primary">nfo</name>
    <name type="ordered locus">ETA_12770</name>
</gene>
<reference key="1">
    <citation type="journal article" date="2008" name="Environ. Microbiol.">
        <title>The genome of Erwinia tasmaniensis strain Et1/99, a non-pathogenic bacterium in the genus Erwinia.</title>
        <authorList>
            <person name="Kube M."/>
            <person name="Migdoll A.M."/>
            <person name="Mueller I."/>
            <person name="Kuhl H."/>
            <person name="Beck A."/>
            <person name="Reinhardt R."/>
            <person name="Geider K."/>
        </authorList>
    </citation>
    <scope>NUCLEOTIDE SEQUENCE [LARGE SCALE GENOMIC DNA]</scope>
    <source>
        <strain>DSM 17950 / CFBP 7177 / CIP 109463 / NCPPB 4357 / Et1/99</strain>
    </source>
</reference>
<proteinExistence type="inferred from homology"/>
<sequence length="280" mass="31269">MKYIGAHVSAAGGVDRAVERASELEATAFALFTKNQRQWHAAPLTDEVISAFRLACEKHRYTPAQILPHDSYLINLGHPVAEALEKSRDAFLDEMNRCQQLGLTLLNFHPGSHLQQITEDECLKRIAESINIVLNNTAGVTAVIENTAGQGSNLGFRFEHLAAIIDGVEDKSRVGVCIDTCHAFAGGYDLRSEEACVNTFAEFERIVGFQYLRGMHLNDAKSEFNSRVDRHHSLGEGNIGKAAFSWLMKDKRFDGIPMILETIDPEIWKDEIAWLKSEQK</sequence>
<comment type="function">
    <text evidence="1">Endonuclease IV plays a role in DNA repair. It cleaves phosphodiester bonds at apurinic or apyrimidinic (AP) sites, generating a 3'-hydroxyl group and a 5'-terminal sugar phosphate.</text>
</comment>
<comment type="catalytic activity">
    <reaction evidence="1">
        <text>Endonucleolytic cleavage to 5'-phosphooligonucleotide end-products.</text>
        <dbReference type="EC" id="3.1.21.2"/>
    </reaction>
</comment>
<comment type="cofactor">
    <cofactor evidence="1">
        <name>Zn(2+)</name>
        <dbReference type="ChEBI" id="CHEBI:29105"/>
    </cofactor>
    <text evidence="1">Binds 3 Zn(2+) ions.</text>
</comment>
<comment type="similarity">
    <text evidence="1">Belongs to the AP endonuclease 2 family.</text>
</comment>
<evidence type="ECO:0000255" key="1">
    <source>
        <dbReference type="HAMAP-Rule" id="MF_00152"/>
    </source>
</evidence>
<accession>B2VIH1</accession>
<keyword id="KW-0227">DNA damage</keyword>
<keyword id="KW-0234">DNA repair</keyword>
<keyword id="KW-0255">Endonuclease</keyword>
<keyword id="KW-0378">Hydrolase</keyword>
<keyword id="KW-0479">Metal-binding</keyword>
<keyword id="KW-0540">Nuclease</keyword>
<keyword id="KW-1185">Reference proteome</keyword>
<keyword id="KW-0862">Zinc</keyword>
<dbReference type="EC" id="3.1.21.2" evidence="1"/>
<dbReference type="EMBL" id="CU468135">
    <property type="protein sequence ID" value="CAO96323.1"/>
    <property type="molecule type" value="Genomic_DNA"/>
</dbReference>
<dbReference type="RefSeq" id="WP_012441017.1">
    <property type="nucleotide sequence ID" value="NC_010694.1"/>
</dbReference>
<dbReference type="SMR" id="B2VIH1"/>
<dbReference type="STRING" id="465817.ETA_12770"/>
<dbReference type="KEGG" id="eta:ETA_12770"/>
<dbReference type="eggNOG" id="COG0648">
    <property type="taxonomic scope" value="Bacteria"/>
</dbReference>
<dbReference type="HOGENOM" id="CLU_025885_0_4_6"/>
<dbReference type="OrthoDB" id="9805666at2"/>
<dbReference type="Proteomes" id="UP000001726">
    <property type="component" value="Chromosome"/>
</dbReference>
<dbReference type="GO" id="GO:0008833">
    <property type="term" value="F:deoxyribonuclease IV (phage-T4-induced) activity"/>
    <property type="evidence" value="ECO:0007669"/>
    <property type="project" value="UniProtKB-UniRule"/>
</dbReference>
<dbReference type="GO" id="GO:0003677">
    <property type="term" value="F:DNA binding"/>
    <property type="evidence" value="ECO:0007669"/>
    <property type="project" value="InterPro"/>
</dbReference>
<dbReference type="GO" id="GO:0003906">
    <property type="term" value="F:DNA-(apurinic or apyrimidinic site) endonuclease activity"/>
    <property type="evidence" value="ECO:0007669"/>
    <property type="project" value="TreeGrafter"/>
</dbReference>
<dbReference type="GO" id="GO:0008081">
    <property type="term" value="F:phosphoric diester hydrolase activity"/>
    <property type="evidence" value="ECO:0007669"/>
    <property type="project" value="TreeGrafter"/>
</dbReference>
<dbReference type="GO" id="GO:0008270">
    <property type="term" value="F:zinc ion binding"/>
    <property type="evidence" value="ECO:0007669"/>
    <property type="project" value="UniProtKB-UniRule"/>
</dbReference>
<dbReference type="GO" id="GO:0006284">
    <property type="term" value="P:base-excision repair"/>
    <property type="evidence" value="ECO:0007669"/>
    <property type="project" value="TreeGrafter"/>
</dbReference>
<dbReference type="CDD" id="cd00019">
    <property type="entry name" value="AP2Ec"/>
    <property type="match status" value="1"/>
</dbReference>
<dbReference type="FunFam" id="3.20.20.150:FF:000001">
    <property type="entry name" value="Probable endonuclease 4"/>
    <property type="match status" value="1"/>
</dbReference>
<dbReference type="Gene3D" id="3.20.20.150">
    <property type="entry name" value="Divalent-metal-dependent TIM barrel enzymes"/>
    <property type="match status" value="1"/>
</dbReference>
<dbReference type="HAMAP" id="MF_00152">
    <property type="entry name" value="Nfo"/>
    <property type="match status" value="1"/>
</dbReference>
<dbReference type="InterPro" id="IPR001719">
    <property type="entry name" value="AP_endonuc_2"/>
</dbReference>
<dbReference type="InterPro" id="IPR018246">
    <property type="entry name" value="AP_endonuc_F2_Zn_BS"/>
</dbReference>
<dbReference type="InterPro" id="IPR036237">
    <property type="entry name" value="Xyl_isomerase-like_sf"/>
</dbReference>
<dbReference type="InterPro" id="IPR013022">
    <property type="entry name" value="Xyl_isomerase-like_TIM-brl"/>
</dbReference>
<dbReference type="NCBIfam" id="TIGR00587">
    <property type="entry name" value="nfo"/>
    <property type="match status" value="1"/>
</dbReference>
<dbReference type="NCBIfam" id="NF002199">
    <property type="entry name" value="PRK01060.1-4"/>
    <property type="match status" value="1"/>
</dbReference>
<dbReference type="PANTHER" id="PTHR21445:SF0">
    <property type="entry name" value="APURINIC-APYRIMIDINIC ENDONUCLEASE"/>
    <property type="match status" value="1"/>
</dbReference>
<dbReference type="PANTHER" id="PTHR21445">
    <property type="entry name" value="ENDONUCLEASE IV ENDODEOXYRIBONUCLEASE IV"/>
    <property type="match status" value="1"/>
</dbReference>
<dbReference type="Pfam" id="PF01261">
    <property type="entry name" value="AP_endonuc_2"/>
    <property type="match status" value="1"/>
</dbReference>
<dbReference type="SMART" id="SM00518">
    <property type="entry name" value="AP2Ec"/>
    <property type="match status" value="1"/>
</dbReference>
<dbReference type="SUPFAM" id="SSF51658">
    <property type="entry name" value="Xylose isomerase-like"/>
    <property type="match status" value="1"/>
</dbReference>
<dbReference type="PROSITE" id="PS00729">
    <property type="entry name" value="AP_NUCLEASE_F2_1"/>
    <property type="match status" value="1"/>
</dbReference>
<dbReference type="PROSITE" id="PS00730">
    <property type="entry name" value="AP_NUCLEASE_F2_2"/>
    <property type="match status" value="1"/>
</dbReference>
<dbReference type="PROSITE" id="PS00731">
    <property type="entry name" value="AP_NUCLEASE_F2_3"/>
    <property type="match status" value="1"/>
</dbReference>
<dbReference type="PROSITE" id="PS51432">
    <property type="entry name" value="AP_NUCLEASE_F2_4"/>
    <property type="match status" value="1"/>
</dbReference>
<feature type="chain" id="PRO_1000096882" description="Probable endonuclease 4">
    <location>
        <begin position="1"/>
        <end position="280"/>
    </location>
</feature>
<feature type="binding site" evidence="1">
    <location>
        <position position="69"/>
    </location>
    <ligand>
        <name>Zn(2+)</name>
        <dbReference type="ChEBI" id="CHEBI:29105"/>
        <label>1</label>
    </ligand>
</feature>
<feature type="binding site" evidence="1">
    <location>
        <position position="109"/>
    </location>
    <ligand>
        <name>Zn(2+)</name>
        <dbReference type="ChEBI" id="CHEBI:29105"/>
        <label>1</label>
    </ligand>
</feature>
<feature type="binding site" evidence="1">
    <location>
        <position position="145"/>
    </location>
    <ligand>
        <name>Zn(2+)</name>
        <dbReference type="ChEBI" id="CHEBI:29105"/>
        <label>1</label>
    </ligand>
</feature>
<feature type="binding site" evidence="1">
    <location>
        <position position="145"/>
    </location>
    <ligand>
        <name>Zn(2+)</name>
        <dbReference type="ChEBI" id="CHEBI:29105"/>
        <label>2</label>
    </ligand>
</feature>
<feature type="binding site" evidence="1">
    <location>
        <position position="179"/>
    </location>
    <ligand>
        <name>Zn(2+)</name>
        <dbReference type="ChEBI" id="CHEBI:29105"/>
        <label>2</label>
    </ligand>
</feature>
<feature type="binding site" evidence="1">
    <location>
        <position position="182"/>
    </location>
    <ligand>
        <name>Zn(2+)</name>
        <dbReference type="ChEBI" id="CHEBI:29105"/>
        <label>3</label>
    </ligand>
</feature>
<feature type="binding site" evidence="1">
    <location>
        <position position="216"/>
    </location>
    <ligand>
        <name>Zn(2+)</name>
        <dbReference type="ChEBI" id="CHEBI:29105"/>
        <label>2</label>
    </ligand>
</feature>
<feature type="binding site" evidence="1">
    <location>
        <position position="229"/>
    </location>
    <ligand>
        <name>Zn(2+)</name>
        <dbReference type="ChEBI" id="CHEBI:29105"/>
        <label>3</label>
    </ligand>
</feature>
<feature type="binding site" evidence="1">
    <location>
        <position position="231"/>
    </location>
    <ligand>
        <name>Zn(2+)</name>
        <dbReference type="ChEBI" id="CHEBI:29105"/>
        <label>3</label>
    </ligand>
</feature>
<feature type="binding site" evidence="1">
    <location>
        <position position="261"/>
    </location>
    <ligand>
        <name>Zn(2+)</name>
        <dbReference type="ChEBI" id="CHEBI:29105"/>
        <label>2</label>
    </ligand>
</feature>
<protein>
    <recommendedName>
        <fullName evidence="1">Probable endonuclease 4</fullName>
        <ecNumber evidence="1">3.1.21.2</ecNumber>
    </recommendedName>
    <alternativeName>
        <fullName evidence="1">Endodeoxyribonuclease IV</fullName>
    </alternativeName>
    <alternativeName>
        <fullName evidence="1">Endonuclease IV</fullName>
    </alternativeName>
</protein>